<proteinExistence type="inferred from homology"/>
<organism>
    <name type="scientific">Thermosipho africanus (strain TCF52B)</name>
    <dbReference type="NCBI Taxonomy" id="484019"/>
    <lineage>
        <taxon>Bacteria</taxon>
        <taxon>Thermotogati</taxon>
        <taxon>Thermotogota</taxon>
        <taxon>Thermotogae</taxon>
        <taxon>Thermotogales</taxon>
        <taxon>Fervidobacteriaceae</taxon>
        <taxon>Thermosipho</taxon>
    </lineage>
</organism>
<feature type="chain" id="PRO_1000118242" description="Translational regulator CsrA">
    <location>
        <begin position="1"/>
        <end position="73"/>
    </location>
</feature>
<keyword id="KW-1005">Bacterial flagellum biogenesis</keyword>
<keyword id="KW-0963">Cytoplasm</keyword>
<keyword id="KW-1185">Reference proteome</keyword>
<keyword id="KW-0678">Repressor</keyword>
<keyword id="KW-0694">RNA-binding</keyword>
<keyword id="KW-0810">Translation regulation</keyword>
<reference key="1">
    <citation type="journal article" date="2009" name="J. Bacteriol.">
        <title>The genome of Thermosipho africanus TCF52B: lateral genetic connections to the Firmicutes and Archaea.</title>
        <authorList>
            <person name="Nesboe C.L."/>
            <person name="Bapteste E."/>
            <person name="Curtis B."/>
            <person name="Dahle H."/>
            <person name="Lopez P."/>
            <person name="Macleod D."/>
            <person name="Dlutek M."/>
            <person name="Bowman S."/>
            <person name="Zhaxybayeva O."/>
            <person name="Birkeland N.-K."/>
            <person name="Doolittle W.F."/>
        </authorList>
    </citation>
    <scope>NUCLEOTIDE SEQUENCE [LARGE SCALE GENOMIC DNA]</scope>
    <source>
        <strain>TCF52B</strain>
    </source>
</reference>
<gene>
    <name evidence="1" type="primary">csrA</name>
    <name type="ordered locus">THA_480</name>
</gene>
<protein>
    <recommendedName>
        <fullName evidence="1">Translational regulator CsrA</fullName>
    </recommendedName>
</protein>
<evidence type="ECO:0000255" key="1">
    <source>
        <dbReference type="HAMAP-Rule" id="MF_00167"/>
    </source>
</evidence>
<dbReference type="EMBL" id="CP001185">
    <property type="protein sequence ID" value="ACJ74971.1"/>
    <property type="molecule type" value="Genomic_DNA"/>
</dbReference>
<dbReference type="RefSeq" id="WP_004104262.1">
    <property type="nucleotide sequence ID" value="NC_011653.1"/>
</dbReference>
<dbReference type="SMR" id="B7IFV7"/>
<dbReference type="STRING" id="484019.THA_480"/>
<dbReference type="KEGG" id="taf:THA_480"/>
<dbReference type="eggNOG" id="COG1551">
    <property type="taxonomic scope" value="Bacteria"/>
</dbReference>
<dbReference type="HOGENOM" id="CLU_164837_0_1_0"/>
<dbReference type="Proteomes" id="UP000002453">
    <property type="component" value="Chromosome"/>
</dbReference>
<dbReference type="GO" id="GO:0005829">
    <property type="term" value="C:cytosol"/>
    <property type="evidence" value="ECO:0007669"/>
    <property type="project" value="TreeGrafter"/>
</dbReference>
<dbReference type="GO" id="GO:0048027">
    <property type="term" value="F:mRNA 5'-UTR binding"/>
    <property type="evidence" value="ECO:0007669"/>
    <property type="project" value="UniProtKB-UniRule"/>
</dbReference>
<dbReference type="GO" id="GO:0044781">
    <property type="term" value="P:bacterial-type flagellum organization"/>
    <property type="evidence" value="ECO:0007669"/>
    <property type="project" value="UniProtKB-KW"/>
</dbReference>
<dbReference type="GO" id="GO:0006402">
    <property type="term" value="P:mRNA catabolic process"/>
    <property type="evidence" value="ECO:0007669"/>
    <property type="project" value="InterPro"/>
</dbReference>
<dbReference type="GO" id="GO:0045947">
    <property type="term" value="P:negative regulation of translational initiation"/>
    <property type="evidence" value="ECO:0007669"/>
    <property type="project" value="UniProtKB-UniRule"/>
</dbReference>
<dbReference type="GO" id="GO:1902208">
    <property type="term" value="P:regulation of bacterial-type flagellum assembly"/>
    <property type="evidence" value="ECO:0007669"/>
    <property type="project" value="UniProtKB-UniRule"/>
</dbReference>
<dbReference type="GO" id="GO:0006109">
    <property type="term" value="P:regulation of carbohydrate metabolic process"/>
    <property type="evidence" value="ECO:0007669"/>
    <property type="project" value="InterPro"/>
</dbReference>
<dbReference type="FunFam" id="2.60.40.4380:FF:000002">
    <property type="entry name" value="Translational regulator CsrA"/>
    <property type="match status" value="1"/>
</dbReference>
<dbReference type="Gene3D" id="2.60.40.4380">
    <property type="entry name" value="Translational regulator CsrA"/>
    <property type="match status" value="1"/>
</dbReference>
<dbReference type="HAMAP" id="MF_00167">
    <property type="entry name" value="CsrA"/>
    <property type="match status" value="1"/>
</dbReference>
<dbReference type="InterPro" id="IPR003751">
    <property type="entry name" value="CsrA"/>
</dbReference>
<dbReference type="InterPro" id="IPR036107">
    <property type="entry name" value="CsrA_sf"/>
</dbReference>
<dbReference type="NCBIfam" id="TIGR00202">
    <property type="entry name" value="csrA"/>
    <property type="match status" value="1"/>
</dbReference>
<dbReference type="NCBIfam" id="NF002469">
    <property type="entry name" value="PRK01712.1"/>
    <property type="match status" value="1"/>
</dbReference>
<dbReference type="PANTHER" id="PTHR34984">
    <property type="entry name" value="CARBON STORAGE REGULATOR"/>
    <property type="match status" value="1"/>
</dbReference>
<dbReference type="PANTHER" id="PTHR34984:SF1">
    <property type="entry name" value="CARBON STORAGE REGULATOR"/>
    <property type="match status" value="1"/>
</dbReference>
<dbReference type="Pfam" id="PF02599">
    <property type="entry name" value="CsrA"/>
    <property type="match status" value="1"/>
</dbReference>
<dbReference type="SUPFAM" id="SSF117130">
    <property type="entry name" value="CsrA-like"/>
    <property type="match status" value="1"/>
</dbReference>
<name>CSRA_THEAB</name>
<accession>B7IFV7</accession>
<comment type="function">
    <text evidence="1">A translational regulator that binds mRNA to regulate translation initiation and/or mRNA stability. Usually binds in the 5'-UTR at or near the Shine-Dalgarno sequence preventing ribosome-binding, thus repressing translation. Its main target seems to be the major flagellin gene, while its function is anatagonized by FliW.</text>
</comment>
<comment type="subunit">
    <text evidence="1">Homodimer; the beta-strands of each monomer intercalate to form a hydrophobic core, while the alpha-helices form wings that extend away from the core.</text>
</comment>
<comment type="subcellular location">
    <subcellularLocation>
        <location evidence="1">Cytoplasm</location>
    </subcellularLocation>
</comment>
<comment type="similarity">
    <text evidence="1">Belongs to the CsrA/RsmA family.</text>
</comment>
<sequence>MLVLSRKIGQSIIIGNDIEIKILKIDGGEIKIGIEAPKDVKVLRKELYEELLKENKEAVKFDIKNLPGFFKKK</sequence>